<gene>
    <name evidence="1" type="primary">secB</name>
    <name type="ordered locus">Mpe_A0716</name>
</gene>
<keyword id="KW-0143">Chaperone</keyword>
<keyword id="KW-0963">Cytoplasm</keyword>
<keyword id="KW-0653">Protein transport</keyword>
<keyword id="KW-1185">Reference proteome</keyword>
<keyword id="KW-0811">Translocation</keyword>
<keyword id="KW-0813">Transport</keyword>
<organism>
    <name type="scientific">Methylibium petroleiphilum (strain ATCC BAA-1232 / LMG 22953 / PM1)</name>
    <dbReference type="NCBI Taxonomy" id="420662"/>
    <lineage>
        <taxon>Bacteria</taxon>
        <taxon>Pseudomonadati</taxon>
        <taxon>Pseudomonadota</taxon>
        <taxon>Betaproteobacteria</taxon>
        <taxon>Burkholderiales</taxon>
        <taxon>Sphaerotilaceae</taxon>
        <taxon>Methylibium</taxon>
    </lineage>
</organism>
<evidence type="ECO:0000255" key="1">
    <source>
        <dbReference type="HAMAP-Rule" id="MF_00821"/>
    </source>
</evidence>
<evidence type="ECO:0000305" key="2"/>
<comment type="function">
    <text evidence="1">One of the proteins required for the normal export of preproteins out of the cell cytoplasm. It is a molecular chaperone that binds to a subset of precursor proteins, maintaining them in a translocation-competent state. It also specifically binds to its receptor SecA.</text>
</comment>
<comment type="subunit">
    <text evidence="1">Homotetramer, a dimer of dimers. One homotetramer interacts with 1 SecA dimer.</text>
</comment>
<comment type="subcellular location">
    <subcellularLocation>
        <location evidence="1">Cytoplasm</location>
    </subcellularLocation>
</comment>
<comment type="similarity">
    <text evidence="1">Belongs to the SecB family.</text>
</comment>
<comment type="sequence caution" evidence="2">
    <conflict type="erroneous initiation">
        <sequence resource="EMBL-CDS" id="ABM93678"/>
    </conflict>
</comment>
<dbReference type="EMBL" id="CP000555">
    <property type="protein sequence ID" value="ABM93678.1"/>
    <property type="status" value="ALT_INIT"/>
    <property type="molecule type" value="Genomic_DNA"/>
</dbReference>
<dbReference type="RefSeq" id="WP_036230692.1">
    <property type="nucleotide sequence ID" value="NC_008825.1"/>
</dbReference>
<dbReference type="SMR" id="A2SDN9"/>
<dbReference type="STRING" id="420662.Mpe_A0716"/>
<dbReference type="KEGG" id="mpt:Mpe_A0716"/>
<dbReference type="eggNOG" id="COG1952">
    <property type="taxonomic scope" value="Bacteria"/>
</dbReference>
<dbReference type="HOGENOM" id="CLU_111574_1_0_4"/>
<dbReference type="Proteomes" id="UP000000366">
    <property type="component" value="Chromosome"/>
</dbReference>
<dbReference type="GO" id="GO:0005737">
    <property type="term" value="C:cytoplasm"/>
    <property type="evidence" value="ECO:0007669"/>
    <property type="project" value="UniProtKB-SubCell"/>
</dbReference>
<dbReference type="GO" id="GO:0051082">
    <property type="term" value="F:unfolded protein binding"/>
    <property type="evidence" value="ECO:0007669"/>
    <property type="project" value="InterPro"/>
</dbReference>
<dbReference type="GO" id="GO:0006457">
    <property type="term" value="P:protein folding"/>
    <property type="evidence" value="ECO:0007669"/>
    <property type="project" value="UniProtKB-UniRule"/>
</dbReference>
<dbReference type="GO" id="GO:0051262">
    <property type="term" value="P:protein tetramerization"/>
    <property type="evidence" value="ECO:0007669"/>
    <property type="project" value="InterPro"/>
</dbReference>
<dbReference type="GO" id="GO:0015031">
    <property type="term" value="P:protein transport"/>
    <property type="evidence" value="ECO:0007669"/>
    <property type="project" value="UniProtKB-UniRule"/>
</dbReference>
<dbReference type="Gene3D" id="3.10.420.10">
    <property type="entry name" value="SecB-like"/>
    <property type="match status" value="1"/>
</dbReference>
<dbReference type="HAMAP" id="MF_00821">
    <property type="entry name" value="SecB"/>
    <property type="match status" value="1"/>
</dbReference>
<dbReference type="InterPro" id="IPR003708">
    <property type="entry name" value="SecB"/>
</dbReference>
<dbReference type="InterPro" id="IPR035958">
    <property type="entry name" value="SecB-like_sf"/>
</dbReference>
<dbReference type="NCBIfam" id="NF004394">
    <property type="entry name" value="PRK05751.1-5"/>
    <property type="match status" value="1"/>
</dbReference>
<dbReference type="NCBIfam" id="TIGR00809">
    <property type="entry name" value="secB"/>
    <property type="match status" value="1"/>
</dbReference>
<dbReference type="PANTHER" id="PTHR36918">
    <property type="match status" value="1"/>
</dbReference>
<dbReference type="PANTHER" id="PTHR36918:SF1">
    <property type="entry name" value="PROTEIN-EXPORT PROTEIN SECB"/>
    <property type="match status" value="1"/>
</dbReference>
<dbReference type="Pfam" id="PF02556">
    <property type="entry name" value="SecB"/>
    <property type="match status" value="1"/>
</dbReference>
<dbReference type="PRINTS" id="PR01594">
    <property type="entry name" value="SECBCHAPRONE"/>
</dbReference>
<dbReference type="SUPFAM" id="SSF54611">
    <property type="entry name" value="SecB-like"/>
    <property type="match status" value="1"/>
</dbReference>
<accession>A2SDN9</accession>
<sequence>MAEQDSNPVFQIQRVYLKDVSLEQPNSPQILLEQSQPQVDISLAVNAETVADGIYEVSVTATVTTKVADKTLFLCEAKQAGIFEIRNLPDGQTQPVLGIACPGIVYPYLRATVADIITRAGFPPVHLAEVNFQAMYEAQQQAAAQQQGAVSNGNGGSPIITNA</sequence>
<proteinExistence type="inferred from homology"/>
<name>SECB_METPP</name>
<feature type="chain" id="PRO_0000318246" description="Protein-export protein SecB">
    <location>
        <begin position="1"/>
        <end position="163"/>
    </location>
</feature>
<reference key="1">
    <citation type="journal article" date="2007" name="J. Bacteriol.">
        <title>Whole-genome analysis of the methyl tert-butyl ether-degrading beta-proteobacterium Methylibium petroleiphilum PM1.</title>
        <authorList>
            <person name="Kane S.R."/>
            <person name="Chakicherla A.Y."/>
            <person name="Chain P.S.G."/>
            <person name="Schmidt R."/>
            <person name="Shin M.W."/>
            <person name="Legler T.C."/>
            <person name="Scow K.M."/>
            <person name="Larimer F.W."/>
            <person name="Lucas S.M."/>
            <person name="Richardson P.M."/>
            <person name="Hristova K.R."/>
        </authorList>
    </citation>
    <scope>NUCLEOTIDE SEQUENCE [LARGE SCALE GENOMIC DNA]</scope>
    <source>
        <strain>ATCC BAA-1232 / LMG 22953 / PM1</strain>
    </source>
</reference>
<protein>
    <recommendedName>
        <fullName evidence="1">Protein-export protein SecB</fullName>
    </recommendedName>
</protein>